<comment type="function">
    <text evidence="1">Nucleoside triphosphate pyrophosphatase that hydrolyzes dTTP and UTP. May have a dual role in cell division arrest and in preventing the incorporation of modified nucleotides into cellular nucleic acids.</text>
</comment>
<comment type="catalytic activity">
    <reaction evidence="1">
        <text>dTTP + H2O = dTMP + diphosphate + H(+)</text>
        <dbReference type="Rhea" id="RHEA:28534"/>
        <dbReference type="ChEBI" id="CHEBI:15377"/>
        <dbReference type="ChEBI" id="CHEBI:15378"/>
        <dbReference type="ChEBI" id="CHEBI:33019"/>
        <dbReference type="ChEBI" id="CHEBI:37568"/>
        <dbReference type="ChEBI" id="CHEBI:63528"/>
        <dbReference type="EC" id="3.6.1.9"/>
    </reaction>
</comment>
<comment type="catalytic activity">
    <reaction evidence="1">
        <text>UTP + H2O = UMP + diphosphate + H(+)</text>
        <dbReference type="Rhea" id="RHEA:29395"/>
        <dbReference type="ChEBI" id="CHEBI:15377"/>
        <dbReference type="ChEBI" id="CHEBI:15378"/>
        <dbReference type="ChEBI" id="CHEBI:33019"/>
        <dbReference type="ChEBI" id="CHEBI:46398"/>
        <dbReference type="ChEBI" id="CHEBI:57865"/>
        <dbReference type="EC" id="3.6.1.9"/>
    </reaction>
</comment>
<comment type="cofactor">
    <cofactor evidence="1">
        <name>a divalent metal cation</name>
        <dbReference type="ChEBI" id="CHEBI:60240"/>
    </cofactor>
</comment>
<comment type="subcellular location">
    <subcellularLocation>
        <location evidence="1">Cytoplasm</location>
    </subcellularLocation>
</comment>
<comment type="similarity">
    <text evidence="1">Belongs to the Maf family. YhdE subfamily.</text>
</comment>
<name>NTPPA_NEIG1</name>
<dbReference type="EC" id="3.6.1.9" evidence="1"/>
<dbReference type="EMBL" id="AE004969">
    <property type="protein sequence ID" value="AAW88935.2"/>
    <property type="molecule type" value="Genomic_DNA"/>
</dbReference>
<dbReference type="RefSeq" id="WP_003690630.1">
    <property type="nucleotide sequence ID" value="NC_002946.2"/>
</dbReference>
<dbReference type="RefSeq" id="YP_207347.2">
    <property type="nucleotide sequence ID" value="NC_002946.2"/>
</dbReference>
<dbReference type="SMR" id="Q5FA52"/>
<dbReference type="STRING" id="242231.NGO_0180"/>
<dbReference type="KEGG" id="ngo:NGO_0180"/>
<dbReference type="PATRIC" id="fig|242231.10.peg.226"/>
<dbReference type="HOGENOM" id="CLU_040416_2_1_4"/>
<dbReference type="Proteomes" id="UP000000535">
    <property type="component" value="Chromosome"/>
</dbReference>
<dbReference type="GO" id="GO:0005737">
    <property type="term" value="C:cytoplasm"/>
    <property type="evidence" value="ECO:0007669"/>
    <property type="project" value="UniProtKB-SubCell"/>
</dbReference>
<dbReference type="GO" id="GO:0036218">
    <property type="term" value="F:dTTP diphosphatase activity"/>
    <property type="evidence" value="ECO:0007669"/>
    <property type="project" value="RHEA"/>
</dbReference>
<dbReference type="GO" id="GO:0036221">
    <property type="term" value="F:UTP diphosphatase activity"/>
    <property type="evidence" value="ECO:0007669"/>
    <property type="project" value="RHEA"/>
</dbReference>
<dbReference type="GO" id="GO:0009117">
    <property type="term" value="P:nucleotide metabolic process"/>
    <property type="evidence" value="ECO:0007669"/>
    <property type="project" value="UniProtKB-KW"/>
</dbReference>
<dbReference type="CDD" id="cd00555">
    <property type="entry name" value="Maf"/>
    <property type="match status" value="1"/>
</dbReference>
<dbReference type="Gene3D" id="3.90.950.10">
    <property type="match status" value="1"/>
</dbReference>
<dbReference type="HAMAP" id="MF_00528">
    <property type="entry name" value="Maf"/>
    <property type="match status" value="1"/>
</dbReference>
<dbReference type="InterPro" id="IPR029001">
    <property type="entry name" value="ITPase-like_fam"/>
</dbReference>
<dbReference type="InterPro" id="IPR003697">
    <property type="entry name" value="Maf-like"/>
</dbReference>
<dbReference type="NCBIfam" id="TIGR00172">
    <property type="entry name" value="maf"/>
    <property type="match status" value="1"/>
</dbReference>
<dbReference type="NCBIfam" id="NF010947">
    <property type="entry name" value="PRK14367.1"/>
    <property type="match status" value="1"/>
</dbReference>
<dbReference type="PANTHER" id="PTHR43213">
    <property type="entry name" value="BIFUNCTIONAL DTTP/UTP PYROPHOSPHATASE/METHYLTRANSFERASE PROTEIN-RELATED"/>
    <property type="match status" value="1"/>
</dbReference>
<dbReference type="PANTHER" id="PTHR43213:SF5">
    <property type="entry name" value="BIFUNCTIONAL DTTP_UTP PYROPHOSPHATASE_METHYLTRANSFERASE PROTEIN-RELATED"/>
    <property type="match status" value="1"/>
</dbReference>
<dbReference type="Pfam" id="PF02545">
    <property type="entry name" value="Maf"/>
    <property type="match status" value="1"/>
</dbReference>
<dbReference type="PIRSF" id="PIRSF006305">
    <property type="entry name" value="Maf"/>
    <property type="match status" value="1"/>
</dbReference>
<dbReference type="SUPFAM" id="SSF52972">
    <property type="entry name" value="ITPase-like"/>
    <property type="match status" value="1"/>
</dbReference>
<accession>Q5FA52</accession>
<proteinExistence type="inferred from homology"/>
<organism>
    <name type="scientific">Neisseria gonorrhoeae (strain ATCC 700825 / FA 1090)</name>
    <dbReference type="NCBI Taxonomy" id="242231"/>
    <lineage>
        <taxon>Bacteria</taxon>
        <taxon>Pseudomonadati</taxon>
        <taxon>Pseudomonadota</taxon>
        <taxon>Betaproteobacteria</taxon>
        <taxon>Neisseriales</taxon>
        <taxon>Neisseriaceae</taxon>
        <taxon>Neisseria</taxon>
    </lineage>
</organism>
<evidence type="ECO:0000255" key="1">
    <source>
        <dbReference type="HAMAP-Rule" id="MF_00528"/>
    </source>
</evidence>
<sequence length="202" mass="21893">MNTLYLGSGSPRRMEILTQLGYRVVKLPAGIDETVKAGETPAPYVQRMAEEKNQAALTLFCETNGAMPDFPLITADTCVFSDGIILGKPRSQAEAIEFLNRLSGKQHTVLTAVCIHYRGKTSSRVQTNRVVFKPLSSEEISAYVQSGEPMEKAGAYAVQGIGGIFIQSIEGSFSGIMGLPVYETVSMLQDLGYRPPLSALKP</sequence>
<keyword id="KW-0963">Cytoplasm</keyword>
<keyword id="KW-0378">Hydrolase</keyword>
<keyword id="KW-0546">Nucleotide metabolism</keyword>
<keyword id="KW-1185">Reference proteome</keyword>
<feature type="chain" id="PRO_0000267348" description="dTTP/UTP pyrophosphatase">
    <location>
        <begin position="1"/>
        <end position="202"/>
    </location>
</feature>
<feature type="active site" description="Proton acceptor" evidence="1">
    <location>
        <position position="76"/>
    </location>
</feature>
<feature type="site" description="Important for substrate specificity" evidence="1">
    <location>
        <position position="12"/>
    </location>
</feature>
<feature type="site" description="Important for substrate specificity" evidence="1">
    <location>
        <position position="77"/>
    </location>
</feature>
<feature type="site" description="Important for substrate specificity" evidence="1">
    <location>
        <position position="159"/>
    </location>
</feature>
<protein>
    <recommendedName>
        <fullName evidence="1">dTTP/UTP pyrophosphatase</fullName>
        <shortName evidence="1">dTTPase/UTPase</shortName>
        <ecNumber evidence="1">3.6.1.9</ecNumber>
    </recommendedName>
    <alternativeName>
        <fullName evidence="1">Nucleoside triphosphate pyrophosphatase</fullName>
    </alternativeName>
    <alternativeName>
        <fullName evidence="1">Nucleotide pyrophosphatase</fullName>
        <shortName evidence="1">Nucleotide PPase</shortName>
    </alternativeName>
</protein>
<gene>
    <name type="ordered locus">NGO_0180</name>
</gene>
<reference key="1">
    <citation type="submission" date="2003-03" db="EMBL/GenBank/DDBJ databases">
        <title>The complete genome sequence of Neisseria gonorrhoeae.</title>
        <authorList>
            <person name="Lewis L.A."/>
            <person name="Gillaspy A.F."/>
            <person name="McLaughlin R.E."/>
            <person name="Gipson M."/>
            <person name="Ducey T.F."/>
            <person name="Ownbey T."/>
            <person name="Hartman K."/>
            <person name="Nydick C."/>
            <person name="Carson M.B."/>
            <person name="Vaughn J."/>
            <person name="Thomson C."/>
            <person name="Song L."/>
            <person name="Lin S."/>
            <person name="Yuan X."/>
            <person name="Najar F."/>
            <person name="Zhan M."/>
            <person name="Ren Q."/>
            <person name="Zhu H."/>
            <person name="Qi S."/>
            <person name="Kenton S.M."/>
            <person name="Lai H."/>
            <person name="White J.D."/>
            <person name="Clifton S."/>
            <person name="Roe B.A."/>
            <person name="Dyer D.W."/>
        </authorList>
    </citation>
    <scope>NUCLEOTIDE SEQUENCE [LARGE SCALE GENOMIC DNA]</scope>
    <source>
        <strain>ATCC 700825 / FA 1090</strain>
    </source>
</reference>